<organism>
    <name type="scientific">Mycobacterium marinum (strain ATCC BAA-535 / M)</name>
    <dbReference type="NCBI Taxonomy" id="216594"/>
    <lineage>
        <taxon>Bacteria</taxon>
        <taxon>Bacillati</taxon>
        <taxon>Actinomycetota</taxon>
        <taxon>Actinomycetes</taxon>
        <taxon>Mycobacteriales</taxon>
        <taxon>Mycobacteriaceae</taxon>
        <taxon>Mycobacterium</taxon>
        <taxon>Mycobacterium ulcerans group</taxon>
    </lineage>
</organism>
<protein>
    <recommendedName>
        <fullName evidence="5">ESX-5 secretion system protein EccE5</fullName>
    </recommendedName>
    <alternativeName>
        <fullName evidence="5">ESX conserved component E5</fullName>
    </alternativeName>
    <alternativeName>
        <fullName evidence="5">Type VII secretion system protein EccE5</fullName>
        <shortName evidence="5">T7SS protein EccE5</shortName>
    </alternativeName>
</protein>
<evidence type="ECO:0000255" key="1"/>
<evidence type="ECO:0000269" key="2">
    <source>
    </source>
</evidence>
<evidence type="ECO:0000269" key="3">
    <source>
    </source>
</evidence>
<evidence type="ECO:0000303" key="4">
    <source>
    </source>
</evidence>
<evidence type="ECO:0000305" key="5"/>
<evidence type="ECO:0000312" key="6">
    <source>
        <dbReference type="EMBL" id="ACC41122.1"/>
    </source>
</evidence>
<sequence>MKAQRRFGLALSWARLTTVFVIDLLILIVASHCPDSWQGENRIAWWVGVGIAVLVTLLSVVTYRGITVTSGITAWLWDWSADPGTALGAGCTPAVDHQRRFGRDTVGVREHHGRLVTVITVDDGEGDAAGRHRHRTTQSAVVPVATVAENLRQFDVQLDGVDIVTVEVRGGAEAARASASLDEWGPEEWGMVGESPAANRRRTWLILRMNPQRNVAAIASRDSLASTLVTATERLAQVLDGQSCAARPLAADELAEVDSAILAELEPTWSRPGWRHLKHFNGYATSFWVTPADINAETLDEVWLSDAPEVGATVLTLRLVMRAGEPRLSAWVRYHSDERLPKELSVGLNRLTGRQLAAVRASLPVPSTRAQLVVSSRELLDHDELELPVGQTQEHATSATTGQ</sequence>
<comment type="function">
    <text evidence="2 3">Part of the ESX-5 specialized secretion system, which is responsible for the secretion of EsxN and a number of PE_PGRS and PPE proteins.</text>
</comment>
<comment type="subunit">
    <text evidence="3">Part of the ESX-5 / type VII secretion system (T7SS), which is composed of cytosolic and membrane components. The ESX-5 membrane complex is composed of EccB5, EccC5, EccD5 and EccE5.</text>
</comment>
<comment type="subcellular location">
    <subcellularLocation>
        <location evidence="3">Cell inner membrane</location>
        <topology evidence="1">Multi-pass membrane protein</topology>
    </subcellularLocation>
</comment>
<comment type="similarity">
    <text evidence="5">Belongs to the EccE family.</text>
</comment>
<reference key="1">
    <citation type="journal article" date="2008" name="Genome Res.">
        <title>Insights from the complete genome sequence of Mycobacterium marinum on the evolution of Mycobacterium tuberculosis.</title>
        <authorList>
            <person name="Stinear T.P."/>
            <person name="Seemann T."/>
            <person name="Harrison P.F."/>
            <person name="Jenkin G.A."/>
            <person name="Davies J.K."/>
            <person name="Johnson P.D."/>
            <person name="Abdellah Z."/>
            <person name="Arrowsmith C."/>
            <person name="Chillingworth T."/>
            <person name="Churcher C."/>
            <person name="Clarke K."/>
            <person name="Cronin A."/>
            <person name="Davis P."/>
            <person name="Goodhead I."/>
            <person name="Holroyd N."/>
            <person name="Jagels K."/>
            <person name="Lord A."/>
            <person name="Moule S."/>
            <person name="Mungall K."/>
            <person name="Norbertczak H."/>
            <person name="Quail M.A."/>
            <person name="Rabbinowitsch E."/>
            <person name="Walker D."/>
            <person name="White B."/>
            <person name="Whitehead S."/>
            <person name="Small P.L."/>
            <person name="Brosch R."/>
            <person name="Ramakrishnan L."/>
            <person name="Fischbach M.A."/>
            <person name="Parkhill J."/>
            <person name="Cole S.T."/>
        </authorList>
    </citation>
    <scope>NUCLEOTIDE SEQUENCE [LARGE SCALE GENOMIC DNA]</scope>
    <source>
        <strain>ATCC BAA-535 / M</strain>
    </source>
</reference>
<reference key="2">
    <citation type="journal article" date="2009" name="Mol. Microbiol.">
        <title>PPE and PE_PGRS proteins of Mycobacterium marinum are transported via the type VII secretion system ESX-5.</title>
        <authorList>
            <person name="Abdallah A.M."/>
            <person name="Verboom T."/>
            <person name="Weerdenburg E.M."/>
            <person name="Gey van Pittius N.C."/>
            <person name="Mahasha P.W."/>
            <person name="Jimenez C."/>
            <person name="Parra M."/>
            <person name="Cadieux N."/>
            <person name="Brennan M.J."/>
            <person name="Appelmelk B.J."/>
            <person name="Bitter W."/>
        </authorList>
    </citation>
    <scope>FUNCTION</scope>
</reference>
<reference key="3">
    <citation type="journal article" date="2012" name="Mol. Microbiol.">
        <title>Composition of the type VII secretion system membrane complex.</title>
        <authorList>
            <person name="Houben E.N."/>
            <person name="Bestebroer J."/>
            <person name="Ummels R."/>
            <person name="Wilson L."/>
            <person name="Piersma S.R."/>
            <person name="Jimenez C.R."/>
            <person name="Ottenhoff T.H."/>
            <person name="Luirink J."/>
            <person name="Bitter W."/>
        </authorList>
    </citation>
    <scope>FUNCTION</scope>
    <scope>SUBUNIT</scope>
    <scope>SUBCELLULAR LOCATION</scope>
    <source>
        <strain>ATCC BAA-535 / M</strain>
    </source>
</reference>
<gene>
    <name evidence="4" type="primary">eccE5</name>
    <name evidence="6" type="ordered locus">MMAR_2679</name>
</gene>
<name>ECCE5_MYCMM</name>
<keyword id="KW-0997">Cell inner membrane</keyword>
<keyword id="KW-1003">Cell membrane</keyword>
<keyword id="KW-0472">Membrane</keyword>
<keyword id="KW-1185">Reference proteome</keyword>
<keyword id="KW-0812">Transmembrane</keyword>
<keyword id="KW-1133">Transmembrane helix</keyword>
<keyword id="KW-0813">Transport</keyword>
<proteinExistence type="evidence at protein level"/>
<dbReference type="EMBL" id="CP000854">
    <property type="protein sequence ID" value="ACC41122.1"/>
    <property type="molecule type" value="Genomic_DNA"/>
</dbReference>
<dbReference type="RefSeq" id="WP_012394393.1">
    <property type="nucleotide sequence ID" value="NC_010612.1"/>
</dbReference>
<dbReference type="STRING" id="216594.MMAR_2679"/>
<dbReference type="GeneID" id="34343486"/>
<dbReference type="KEGG" id="mmi:MMAR_2679"/>
<dbReference type="eggNOG" id="ENOG5031ZQB">
    <property type="taxonomic scope" value="Bacteria"/>
</dbReference>
<dbReference type="HOGENOM" id="CLU_677612_0_0_11"/>
<dbReference type="OrthoDB" id="4672446at2"/>
<dbReference type="Proteomes" id="UP000001190">
    <property type="component" value="Chromosome"/>
</dbReference>
<dbReference type="GO" id="GO:0005886">
    <property type="term" value="C:plasma membrane"/>
    <property type="evidence" value="ECO:0007669"/>
    <property type="project" value="UniProtKB-SubCell"/>
</dbReference>
<dbReference type="InterPro" id="IPR050051">
    <property type="entry name" value="EccE_dom"/>
</dbReference>
<dbReference type="InterPro" id="IPR021368">
    <property type="entry name" value="T7SS_EccE"/>
</dbReference>
<dbReference type="NCBIfam" id="TIGR03923">
    <property type="entry name" value="T7SS_EccE"/>
    <property type="match status" value="1"/>
</dbReference>
<dbReference type="Pfam" id="PF11203">
    <property type="entry name" value="EccE"/>
    <property type="match status" value="1"/>
</dbReference>
<accession>B2HSU8</accession>
<feature type="chain" id="PRO_0000434752" description="ESX-5 secretion system protein EccE5">
    <location>
        <begin position="1"/>
        <end position="403"/>
    </location>
</feature>
<feature type="transmembrane region" description="Helical" evidence="1">
    <location>
        <begin position="9"/>
        <end position="29"/>
    </location>
</feature>
<feature type="transmembrane region" description="Helical" evidence="1">
    <location>
        <begin position="43"/>
        <end position="63"/>
    </location>
</feature>